<gene>
    <name evidence="10" type="primary">Pidd1</name>
    <name type="synonym">Lrdd</name>
    <name evidence="8" type="synonym">Pidd</name>
</gene>
<keyword id="KW-0007">Acetylation</keyword>
<keyword id="KW-0053">Apoptosis</keyword>
<keyword id="KW-0963">Cytoplasm</keyword>
<keyword id="KW-0378">Hydrolase</keyword>
<keyword id="KW-0433">Leucine-rich repeat</keyword>
<keyword id="KW-0539">Nucleus</keyword>
<keyword id="KW-0597">Phosphoprotein</keyword>
<keyword id="KW-1185">Reference proteome</keyword>
<keyword id="KW-0677">Repeat</keyword>
<protein>
    <recommendedName>
        <fullName evidence="9">p53-induced death domain-containing protein 1</fullName>
        <ecNumber evidence="2">3.4.21.-</ecNumber>
    </recommendedName>
    <alternativeName>
        <fullName>Leucine-rich repeat and death domain-containing protein</fullName>
    </alternativeName>
    <component>
        <recommendedName>
            <fullName evidence="2">PIDD-N</fullName>
        </recommendedName>
    </component>
    <component>
        <recommendedName>
            <fullName evidence="2">PIDD-C</fullName>
        </recommendedName>
    </component>
    <component>
        <recommendedName>
            <fullName evidence="2">PIDD-CC</fullName>
        </recommendedName>
    </component>
</protein>
<reference key="1">
    <citation type="journal article" date="2000" name="Nat. Genet.">
        <title>Pidd, a new death-domain-containing protein, is induced by p53 and promotes apoptosis.</title>
        <authorList>
            <person name="Lin Y."/>
            <person name="Ma W."/>
            <person name="Benchimol S."/>
        </authorList>
    </citation>
    <scope>NUCLEOTIDE SEQUENCE [MRNA]</scope>
    <scope>TISSUE SPECIFICITY</scope>
    <scope>INDUCTION</scope>
    <scope>FUNCTION</scope>
</reference>
<reference key="2">
    <citation type="journal article" date="2004" name="Genome Res.">
        <title>The status, quality, and expansion of the NIH full-length cDNA project: the Mammalian Gene Collection (MGC).</title>
        <authorList>
            <consortium name="The MGC Project Team"/>
        </authorList>
    </citation>
    <scope>NUCLEOTIDE SEQUENCE [LARGE SCALE MRNA]</scope>
    <source>
        <tissue>Brain</tissue>
    </source>
</reference>
<reference key="3">
    <citation type="journal article" date="2012" name="PLoS ONE">
        <title>Genetic mapping and exome sequencing identify variants associated with five novel diseases.</title>
        <authorList>
            <person name="Puffenberger E.G."/>
            <person name="Jinks R.N."/>
            <person name="Sougnez C."/>
            <person name="Cibulskis K."/>
            <person name="Willert R.A."/>
            <person name="Achilly N.P."/>
            <person name="Cassidy R.P."/>
            <person name="Fiorentini C.J."/>
            <person name="Heiken K.F."/>
            <person name="Lawrence J.J."/>
            <person name="Mahoney M.H."/>
            <person name="Miller C.J."/>
            <person name="Nair D.T."/>
            <person name="Politi K.A."/>
            <person name="Worcester K.N."/>
            <person name="Setton R.A."/>
            <person name="Dipiazza R."/>
            <person name="Sherman E.A."/>
            <person name="Eastman J.T."/>
            <person name="Francklyn C."/>
            <person name="Robey-Bond S."/>
            <person name="Rider N.L."/>
            <person name="Gabriel S."/>
            <person name="Morton D.H."/>
            <person name="Strauss K.A."/>
        </authorList>
    </citation>
    <scope>INTERACTION WITH CRADD</scope>
</reference>
<name>PIDD1_MOUSE</name>
<feature type="initiator methionine" description="Removed" evidence="2">
    <location>
        <position position="1"/>
    </location>
</feature>
<feature type="chain" id="PRO_0000245244" description="p53-induced death domain-containing protein 1">
    <location>
        <begin position="2"/>
        <end position="915"/>
    </location>
</feature>
<feature type="chain" id="PRO_0000445718" description="PIDD-N" evidence="2">
    <location>
        <begin position="2"/>
        <end position="450"/>
    </location>
</feature>
<feature type="chain" id="PRO_0000445719" description="PIDD-C" evidence="2">
    <location>
        <begin position="451"/>
        <end position="915"/>
    </location>
</feature>
<feature type="chain" id="PRO_0000445720" description="PIDD-CC" evidence="2">
    <location>
        <begin position="594"/>
        <end position="915"/>
    </location>
</feature>
<feature type="repeat" description="LRR 1">
    <location>
        <begin position="131"/>
        <end position="152"/>
    </location>
</feature>
<feature type="repeat" description="LRR 2">
    <location>
        <begin position="154"/>
        <end position="176"/>
    </location>
</feature>
<feature type="repeat" description="LRR 3">
    <location>
        <begin position="177"/>
        <end position="199"/>
    </location>
</feature>
<feature type="repeat" description="LRR 4">
    <location>
        <begin position="200"/>
        <end position="221"/>
    </location>
</feature>
<feature type="repeat" description="LRR 5">
    <location>
        <begin position="223"/>
        <end position="245"/>
    </location>
</feature>
<feature type="repeat" description="LRR 6">
    <location>
        <begin position="246"/>
        <end position="268"/>
    </location>
</feature>
<feature type="repeat" description="LRR 7">
    <location>
        <begin position="269"/>
        <end position="290"/>
    </location>
</feature>
<feature type="domain" description="ZU5 1" evidence="4">
    <location>
        <begin position="327"/>
        <end position="459"/>
    </location>
</feature>
<feature type="domain" description="ZU5 2" evidence="4">
    <location>
        <begin position="460"/>
        <end position="601"/>
    </location>
</feature>
<feature type="domain" description="Death" evidence="3">
    <location>
        <begin position="793"/>
        <end position="878"/>
    </location>
</feature>
<feature type="region of interest" description="Peptidase S68" evidence="4">
    <location>
        <begin position="428"/>
        <end position="457"/>
    </location>
</feature>
<feature type="region of interest" description="Peptidase S68" evidence="4">
    <location>
        <begin position="571"/>
        <end position="599"/>
    </location>
</feature>
<feature type="region of interest" description="UPA domain" evidence="1">
    <location>
        <begin position="585"/>
        <end position="721"/>
    </location>
</feature>
<feature type="region of interest" description="Disordered" evidence="5">
    <location>
        <begin position="888"/>
        <end position="915"/>
    </location>
</feature>
<feature type="compositionally biased region" description="Polar residues" evidence="5">
    <location>
        <begin position="901"/>
        <end position="915"/>
    </location>
</feature>
<feature type="active site" evidence="2 4">
    <location>
        <position position="449"/>
    </location>
</feature>
<feature type="active site" evidence="2 4">
    <location>
        <position position="451"/>
    </location>
</feature>
<feature type="active site" evidence="2 4">
    <location>
        <position position="591"/>
    </location>
</feature>
<feature type="active site" evidence="2 4">
    <location>
        <position position="593"/>
    </location>
</feature>
<feature type="site" description="Cleavage; by autolysis" evidence="2">
    <location>
        <begin position="450"/>
        <end position="451"/>
    </location>
</feature>
<feature type="site" description="Cleavage; by autolysis" evidence="2">
    <location>
        <begin position="592"/>
        <end position="593"/>
    </location>
</feature>
<feature type="modified residue" description="N-acetylalanine" evidence="2">
    <location>
        <position position="2"/>
    </location>
</feature>
<feature type="modified residue" description="Phosphoserine" evidence="2">
    <location>
        <position position="304"/>
    </location>
</feature>
<accession>Q9ERV7</accession>
<accession>A6H6F4</accession>
<sequence length="915" mass="101141">MAAVLEGQEPEETAAAAEDAATSTLEAVDAGPGAPFLPAGNQLNLDLRPGGCHRLQYLCSQQPPQLLQVEFLRLSTHEDPQLLDDTLAKVPWSLLRLRSLVLKGGQSRGALGACLHGTLTTLPAGLSDLACLAHLDLSFNRLETLPTCVPELHGLDALLLSHNHLSELPEALGALPALTFLTVTHNRLERLPLTLGSLSTLQRLDLSENLLDTIPSEIGNLRSLSELNLASNRLQSLPASLAGLRSLRLLVLHSNLLTSVPTGLVHLPLITRLDLRDNRLRDLPAELLDAPFVRLQGNPLGEASPAPPSPPDISQVPEMPRLLLTSDLDSFLVTPHGCSVTLACGVRLQFPAGATTTPVTIHYRLWLPEPGLVSLGPHDFLLSSVLELQPHGVAFQQDVSLWLLFVPPRVRRCREVVVRTRSNNTWNDLETQLEEEAPKRLWARCQVPHFSWFLVVLRPVSNTCLLPPEGALLCSSGHPGVRVTFPPGVTEEPRQVSMQVVHMAGLELRTLLEESEASVSPLLCLSQSGPPSFLQPVTVQLPLPPGVTGFSLDRSHLHLLYRTPLTTTWDDITTQVALEFTHLYARFQVTHFSWYWLWYTTKTCVGGLARKAWERLRLHRVNLIALQRRRDPEQVLLQCLPRNKVDATLSRLLVRYRGPEPSETVEMFEGEKFFAAFERGIDVDADRPDCVDGRICFVFYSHLKNVKEVYITTALDREAQDVRGQVSFYRGSLPVEVPAEAEAARQRKGTDALWMATLPIKLPRLRGAQGSGQGTDFSLMPLNLGDAETGFLTQSNLLSVASRLGPDWPAVALHLGMPYHKLQRIRHEFRDDLDGQVRHMLFSWAERQTGQPGAVGHLVQALEQSDRRDVAEEVRAILELGRHKYQDSIRRTGLAPEDSTLPGTSASQTPESAQA</sequence>
<proteinExistence type="evidence at protein level"/>
<dbReference type="EC" id="3.4.21.-" evidence="2"/>
<dbReference type="EMBL" id="AF274973">
    <property type="protein sequence ID" value="AAG13462.1"/>
    <property type="molecule type" value="mRNA"/>
</dbReference>
<dbReference type="EMBL" id="BC145857">
    <property type="protein sequence ID" value="AAI45858.1"/>
    <property type="molecule type" value="mRNA"/>
</dbReference>
<dbReference type="CCDS" id="CCDS22014.1"/>
<dbReference type="RefSeq" id="NP_073145.1">
    <property type="nucleotide sequence ID" value="NM_022654.2"/>
</dbReference>
<dbReference type="RefSeq" id="XP_006536281.1">
    <property type="nucleotide sequence ID" value="XM_006536218.3"/>
</dbReference>
<dbReference type="SMR" id="Q9ERV7"/>
<dbReference type="BioGRID" id="208363">
    <property type="interactions" value="3"/>
</dbReference>
<dbReference type="ComplexPortal" id="CPX-3963">
    <property type="entry name" value="Caspase-2 PIDDosome"/>
</dbReference>
<dbReference type="CORUM" id="Q9ERV7"/>
<dbReference type="FunCoup" id="Q9ERV7">
    <property type="interactions" value="1401"/>
</dbReference>
<dbReference type="STRING" id="10090.ENSMUSP00000026580"/>
<dbReference type="iPTMnet" id="Q9ERV7"/>
<dbReference type="PhosphoSitePlus" id="Q9ERV7"/>
<dbReference type="PaxDb" id="10090-ENSMUSP00000026580"/>
<dbReference type="ProteomicsDB" id="289421"/>
<dbReference type="Antibodypedia" id="22664">
    <property type="antibodies" value="161 antibodies from 25 providers"/>
</dbReference>
<dbReference type="DNASU" id="57913"/>
<dbReference type="Ensembl" id="ENSMUST00000026580.12">
    <property type="protein sequence ID" value="ENSMUSP00000026580.6"/>
    <property type="gene ID" value="ENSMUSG00000025507.14"/>
</dbReference>
<dbReference type="Ensembl" id="ENSMUST00000106005.9">
    <property type="protein sequence ID" value="ENSMUSP00000101627.3"/>
    <property type="gene ID" value="ENSMUSG00000025507.14"/>
</dbReference>
<dbReference type="GeneID" id="57913"/>
<dbReference type="KEGG" id="mmu:57913"/>
<dbReference type="UCSC" id="uc009klc.1">
    <property type="organism name" value="mouse"/>
</dbReference>
<dbReference type="AGR" id="MGI:1889507"/>
<dbReference type="CTD" id="55367"/>
<dbReference type="MGI" id="MGI:1889507">
    <property type="gene designation" value="Pidd1"/>
</dbReference>
<dbReference type="VEuPathDB" id="HostDB:ENSMUSG00000025507"/>
<dbReference type="eggNOG" id="KOG0619">
    <property type="taxonomic scope" value="Eukaryota"/>
</dbReference>
<dbReference type="eggNOG" id="KOG4177">
    <property type="taxonomic scope" value="Eukaryota"/>
</dbReference>
<dbReference type="GeneTree" id="ENSGT00940000161780"/>
<dbReference type="HOGENOM" id="CLU_017883_0_0_1"/>
<dbReference type="InParanoid" id="Q9ERV7"/>
<dbReference type="OMA" id="YPGGCHR"/>
<dbReference type="OrthoDB" id="676979at2759"/>
<dbReference type="PhylomeDB" id="Q9ERV7"/>
<dbReference type="TreeFam" id="TF331183"/>
<dbReference type="Reactome" id="R-MMU-6803207">
    <property type="pathway name" value="TP53 Regulates Transcription of Caspase Activators and Caspases"/>
</dbReference>
<dbReference type="BioGRID-ORCS" id="57913">
    <property type="hits" value="2 hits in 80 CRISPR screens"/>
</dbReference>
<dbReference type="ChiTaRS" id="Pidd1">
    <property type="organism name" value="mouse"/>
</dbReference>
<dbReference type="PRO" id="PR:Q9ERV7"/>
<dbReference type="Proteomes" id="UP000000589">
    <property type="component" value="Chromosome 7"/>
</dbReference>
<dbReference type="RNAct" id="Q9ERV7">
    <property type="molecule type" value="protein"/>
</dbReference>
<dbReference type="Bgee" id="ENSMUSG00000025507">
    <property type="expression patterns" value="Expressed in nasal cavity respiratory epithelium and 107 other cell types or tissues"/>
</dbReference>
<dbReference type="ExpressionAtlas" id="Q9ERV7">
    <property type="expression patterns" value="baseline and differential"/>
</dbReference>
<dbReference type="GO" id="GO:0005737">
    <property type="term" value="C:cytoplasm"/>
    <property type="evidence" value="ECO:0000314"/>
    <property type="project" value="MGI"/>
</dbReference>
<dbReference type="GO" id="GO:0005829">
    <property type="term" value="C:cytosol"/>
    <property type="evidence" value="ECO:0007669"/>
    <property type="project" value="Ensembl"/>
</dbReference>
<dbReference type="GO" id="GO:1905369">
    <property type="term" value="C:endopeptidase complex"/>
    <property type="evidence" value="ECO:0000266"/>
    <property type="project" value="ComplexPortal"/>
</dbReference>
<dbReference type="GO" id="GO:0005794">
    <property type="term" value="C:Golgi apparatus"/>
    <property type="evidence" value="ECO:0007669"/>
    <property type="project" value="Ensembl"/>
</dbReference>
<dbReference type="GO" id="GO:0005730">
    <property type="term" value="C:nucleolus"/>
    <property type="evidence" value="ECO:0000303"/>
    <property type="project" value="ComplexPortal"/>
</dbReference>
<dbReference type="GO" id="GO:0004175">
    <property type="term" value="F:endopeptidase activity"/>
    <property type="evidence" value="ECO:0007669"/>
    <property type="project" value="Ensembl"/>
</dbReference>
<dbReference type="GO" id="GO:0097190">
    <property type="term" value="P:apoptotic signaling pathway"/>
    <property type="evidence" value="ECO:0000316"/>
    <property type="project" value="MGI"/>
</dbReference>
<dbReference type="GO" id="GO:0006974">
    <property type="term" value="P:DNA damage response"/>
    <property type="evidence" value="ECO:0000303"/>
    <property type="project" value="ComplexPortal"/>
</dbReference>
<dbReference type="GO" id="GO:0030330">
    <property type="term" value="P:DNA damage response, signal transduction by p53 class mediator"/>
    <property type="evidence" value="ECO:0007669"/>
    <property type="project" value="Ensembl"/>
</dbReference>
<dbReference type="GO" id="GO:0097191">
    <property type="term" value="P:extrinsic apoptotic signaling pathway"/>
    <property type="evidence" value="ECO:0000316"/>
    <property type="project" value="MGI"/>
</dbReference>
<dbReference type="GO" id="GO:0008625">
    <property type="term" value="P:extrinsic apoptotic signaling pathway via death domain receptors"/>
    <property type="evidence" value="ECO:0000316"/>
    <property type="project" value="MGI"/>
</dbReference>
<dbReference type="GO" id="GO:0043066">
    <property type="term" value="P:negative regulation of apoptotic process"/>
    <property type="evidence" value="ECO:0007669"/>
    <property type="project" value="Ensembl"/>
</dbReference>
<dbReference type="GO" id="GO:0043065">
    <property type="term" value="P:positive regulation of apoptotic process"/>
    <property type="evidence" value="ECO:0000303"/>
    <property type="project" value="ComplexPortal"/>
</dbReference>
<dbReference type="GO" id="GO:0016540">
    <property type="term" value="P:protein autoprocessing"/>
    <property type="evidence" value="ECO:0007669"/>
    <property type="project" value="Ensembl"/>
</dbReference>
<dbReference type="GO" id="GO:0043122">
    <property type="term" value="P:regulation of canonical NF-kappaB signal transduction"/>
    <property type="evidence" value="ECO:0007669"/>
    <property type="project" value="Ensembl"/>
</dbReference>
<dbReference type="FunFam" id="2.60.220.30:FF:000011">
    <property type="entry name" value="P53-induced death domain protein 1"/>
    <property type="match status" value="1"/>
</dbReference>
<dbReference type="FunFam" id="3.80.10.10:FF:000817">
    <property type="entry name" value="P53-induced death domain protein 1"/>
    <property type="match status" value="1"/>
</dbReference>
<dbReference type="FunFam" id="1.10.533.10:FF:000033">
    <property type="entry name" value="p53-induced death domain-containing protein 1 isoform X1"/>
    <property type="match status" value="1"/>
</dbReference>
<dbReference type="FunFam" id="2.60.220.30:FF:000010">
    <property type="entry name" value="p53-induced death domain-containing protein 1 isoform X2"/>
    <property type="match status" value="1"/>
</dbReference>
<dbReference type="Gene3D" id="2.60.220.30">
    <property type="match status" value="2"/>
</dbReference>
<dbReference type="Gene3D" id="1.10.533.10">
    <property type="entry name" value="Death Domain, Fas"/>
    <property type="match status" value="1"/>
</dbReference>
<dbReference type="Gene3D" id="3.80.10.10">
    <property type="entry name" value="Ribonuclease Inhibitor"/>
    <property type="match status" value="1"/>
</dbReference>
<dbReference type="InterPro" id="IPR011029">
    <property type="entry name" value="DEATH-like_dom_sf"/>
</dbReference>
<dbReference type="InterPro" id="IPR000488">
    <property type="entry name" value="Death_dom"/>
</dbReference>
<dbReference type="InterPro" id="IPR001611">
    <property type="entry name" value="Leu-rich_rpt"/>
</dbReference>
<dbReference type="InterPro" id="IPR003591">
    <property type="entry name" value="Leu-rich_rpt_typical-subtyp"/>
</dbReference>
<dbReference type="InterPro" id="IPR032675">
    <property type="entry name" value="LRR_dom_sf"/>
</dbReference>
<dbReference type="InterPro" id="IPR050216">
    <property type="entry name" value="LRR_domain-containing"/>
</dbReference>
<dbReference type="InterPro" id="IPR019502">
    <property type="entry name" value="Peptidase_S68_pidd"/>
</dbReference>
<dbReference type="InterPro" id="IPR000906">
    <property type="entry name" value="ZU5_dom"/>
</dbReference>
<dbReference type="PANTHER" id="PTHR48051">
    <property type="match status" value="1"/>
</dbReference>
<dbReference type="PANTHER" id="PTHR48051:SF39">
    <property type="entry name" value="P53-INDUCED DEATH DOMAIN PROTEIN 1"/>
    <property type="match status" value="1"/>
</dbReference>
<dbReference type="Pfam" id="PF00531">
    <property type="entry name" value="Death"/>
    <property type="match status" value="1"/>
</dbReference>
<dbReference type="Pfam" id="PF00560">
    <property type="entry name" value="LRR_1"/>
    <property type="match status" value="1"/>
</dbReference>
<dbReference type="Pfam" id="PF13855">
    <property type="entry name" value="LRR_8"/>
    <property type="match status" value="2"/>
</dbReference>
<dbReference type="Pfam" id="PF10461">
    <property type="entry name" value="Peptidase_S68"/>
    <property type="match status" value="1"/>
</dbReference>
<dbReference type="Pfam" id="PF00791">
    <property type="entry name" value="ZU5"/>
    <property type="match status" value="2"/>
</dbReference>
<dbReference type="SMART" id="SM00005">
    <property type="entry name" value="DEATH"/>
    <property type="match status" value="1"/>
</dbReference>
<dbReference type="SMART" id="SM00364">
    <property type="entry name" value="LRR_BAC"/>
    <property type="match status" value="6"/>
</dbReference>
<dbReference type="SMART" id="SM00369">
    <property type="entry name" value="LRR_TYP"/>
    <property type="match status" value="7"/>
</dbReference>
<dbReference type="SUPFAM" id="SSF47986">
    <property type="entry name" value="DEATH domain"/>
    <property type="match status" value="1"/>
</dbReference>
<dbReference type="SUPFAM" id="SSF52058">
    <property type="entry name" value="L domain-like"/>
    <property type="match status" value="1"/>
</dbReference>
<dbReference type="PROSITE" id="PS50017">
    <property type="entry name" value="DEATH_DOMAIN"/>
    <property type="match status" value="1"/>
</dbReference>
<dbReference type="PROSITE" id="PS51450">
    <property type="entry name" value="LRR"/>
    <property type="match status" value="7"/>
</dbReference>
<dbReference type="PROSITE" id="PS51145">
    <property type="entry name" value="ZU5"/>
    <property type="match status" value="2"/>
</dbReference>
<comment type="function">
    <text evidence="2 6">Component of the DNA damage/stress response pathway that functions downstream of p53/TP53 and can either promote cell survival or apoptosis (PubMed:10973264). Associated with CRADD and the CASP2 caspase, it forms the PIDDosome a complex that activates CASP2 and triggers apoptosis. Associated with IKBKG and RIPK1, it enhances sumoylation and ubiquitination of IKBKG which is important for activation of the transcription factor NF-kappa-B (By similarity).</text>
</comment>
<comment type="subunit">
    <text evidence="2 7">Forms a complex named the PIDDosome with CASP2 and CRADD (PubMed:22279524). Forms a complex with IKBKG and RIPK1. Interacts with FADD and MADD (By similarity).</text>
</comment>
<comment type="subcellular location">
    <subcellularLocation>
        <location evidence="2">Cytoplasm</location>
    </subcellularLocation>
    <subcellularLocation>
        <location evidence="2">Nucleus</location>
    </subcellularLocation>
    <text evidence="2">Enriched in the nucleus upon DNA damage.</text>
</comment>
<comment type="tissue specificity">
    <text evidence="6">Ubiquitous.</text>
</comment>
<comment type="induction">
    <text evidence="6">Induced by TP53/tumor suppressor p53 and gamma-irradiation.</text>
</comment>
<comment type="domain">
    <text evidence="2">The Death domain mediates the interaction with CRADD and the formation of a complex composed of 5 PIDD1 and 7 CRADD proteins which in turn recruit 7 CASP2 to form the PIDDosome.</text>
</comment>
<comment type="domain">
    <text evidence="2">The LRR repeat-containing domain has a regulatory activity, being autoinhibitory for the activation of NF-kappa-B.</text>
</comment>
<comment type="PTM">
    <text evidence="2">Undergoes autoproteolytic processing whose extent either directs cells towards survival or apoptotic pathways. Autoproteolytically cleaved into two main fragments PIDD-N and PIDD-C. PIDD-C can be further processed into PIDD-CC, a processing which is enhanced by DNA damage. The cleavage producing PIDD-C is required for translocation of PIDD1 to the nucleus upon DNA damage and activation of NF-kappa-B. PIDD-CC mediates the interaction with CRADD and the cleavage producing PIDD-CC is required for the activation of CASP2. PIDD-N remains associated with PIDD-C and PIDD-CC after cleavage.</text>
</comment>
<organism>
    <name type="scientific">Mus musculus</name>
    <name type="common">Mouse</name>
    <dbReference type="NCBI Taxonomy" id="10090"/>
    <lineage>
        <taxon>Eukaryota</taxon>
        <taxon>Metazoa</taxon>
        <taxon>Chordata</taxon>
        <taxon>Craniata</taxon>
        <taxon>Vertebrata</taxon>
        <taxon>Euteleostomi</taxon>
        <taxon>Mammalia</taxon>
        <taxon>Eutheria</taxon>
        <taxon>Euarchontoglires</taxon>
        <taxon>Glires</taxon>
        <taxon>Rodentia</taxon>
        <taxon>Myomorpha</taxon>
        <taxon>Muroidea</taxon>
        <taxon>Muridae</taxon>
        <taxon>Murinae</taxon>
        <taxon>Mus</taxon>
        <taxon>Mus</taxon>
    </lineage>
</organism>
<evidence type="ECO:0000250" key="1"/>
<evidence type="ECO:0000250" key="2">
    <source>
        <dbReference type="UniProtKB" id="Q9HB75"/>
    </source>
</evidence>
<evidence type="ECO:0000255" key="3">
    <source>
        <dbReference type="PROSITE-ProRule" id="PRU00064"/>
    </source>
</evidence>
<evidence type="ECO:0000255" key="4">
    <source>
        <dbReference type="PROSITE-ProRule" id="PRU00485"/>
    </source>
</evidence>
<evidence type="ECO:0000256" key="5">
    <source>
        <dbReference type="SAM" id="MobiDB-lite"/>
    </source>
</evidence>
<evidence type="ECO:0000269" key="6">
    <source>
    </source>
</evidence>
<evidence type="ECO:0000269" key="7">
    <source>
    </source>
</evidence>
<evidence type="ECO:0000303" key="8">
    <source>
    </source>
</evidence>
<evidence type="ECO:0000305" key="9"/>
<evidence type="ECO:0000312" key="10">
    <source>
        <dbReference type="MGI" id="MGI:1889507"/>
    </source>
</evidence>